<comment type="function">
    <text evidence="1 2 3 4 8">Acyl-CoA dehydrogenase; part of the gene cluster that mediates the biosynthesis of aspyridones (PubMed:17369821, Ref.5). The polyketide-amino acid backbone preaspyridone A is first assembled by the PKS-NRPS hybrid apdA (PubMed:17369821, PubMed:20828130). The assembly of preaspyridone A is initiated by loading of malonyl-CoA onto apdA, followed by decarboxylation to yield the acetyl starter unit (PubMed:20828130). The growing polyketide chain then elongates into a tetraketide (PubMed:20828130). The adpA PKS module catalyzes three Claisen condensations, as well as beta-keto processing and methylation (PubMed:17369821, PubMed:20828130). Alpha-methylation step during polyketide synthesis is a prerequisite and a key checkpoint for chain transfer between PKS and NRPS modules (PubMed:25494235). The downstream NRPS module contains the condensation (C), adenylation (A), and thiolation (T) domains and catalyzes the incorporation of tyrosine via the formation of the L-tyrosinyl-thioester and the amide linkage between L-tyrosinyl-thioester and the tetraketide (PubMed:20828130). The bimodular assembly line is terminated with a reductase (R) domain that facilitates formation and release of the tetramic acid product (PubMed:20828130). Because apdA lacks a designated enoylreductase (ER) domain, the required activity is provided the enoyl reductase apdC (PubMed:17369821, PubMed:20828130, Ref.5). ApdC appears to operate with different stereoselectivity in different PKS cycle (Ref.5). Combined with apdC, apdA is proposed to synthesize preaspyridone A via about 20 enzymatic steps (PubMed:20828130). A number of oxidative steps performed successively by the cytochrome P450 monooxygenases apdE and apdB are required for the conversion of preaspyridone A to aspyridone A (PubMed:17369821). The cytochrome P450 monooxygenase apdE is responsible for the oxidative dephenylation of preaspyridone A (Ref.5). Finally, the predicted FAD-dependent monooxygenase apdD and the acyl-CoA dehydrogenase apdG may be involved in the transformation of aspyridone A into aspyridone B (Probable) (PubMed:17369821).</text>
</comment>
<comment type="cofactor">
    <cofactor evidence="6">
        <name>FAD</name>
        <dbReference type="ChEBI" id="CHEBI:57692"/>
    </cofactor>
</comment>
<comment type="pathway">
    <text evidence="1">Secondary metabolite biosynthesis.</text>
</comment>
<comment type="induction">
    <text evidence="1">Expression is positively regulated by the aspyridones cluster specific transcription regulator apdR (PubMed:17369821).</text>
</comment>
<comment type="similarity">
    <text evidence="6">Belongs to the acyl-CoA dehydrogenase family.</text>
</comment>
<dbReference type="EC" id="1.-.-.-" evidence="7"/>
<dbReference type="EMBL" id="BN001305">
    <property type="protein sequence ID" value="CBF80495.1"/>
    <property type="molecule type" value="Genomic_DNA"/>
</dbReference>
<dbReference type="EMBL" id="AACD01000153">
    <property type="protein sequence ID" value="EAA67037.1"/>
    <property type="molecule type" value="Genomic_DNA"/>
</dbReference>
<dbReference type="RefSeq" id="XP_681684.1">
    <property type="nucleotide sequence ID" value="XM_676592.1"/>
</dbReference>
<dbReference type="SMR" id="Q5ATG5"/>
<dbReference type="STRING" id="227321.Q5ATG5"/>
<dbReference type="EnsemblFungi" id="CBF80495">
    <property type="protein sequence ID" value="CBF80495"/>
    <property type="gene ID" value="ANIA_08415"/>
</dbReference>
<dbReference type="KEGG" id="ani:ANIA_08415"/>
<dbReference type="VEuPathDB" id="FungiDB:AN8415"/>
<dbReference type="eggNOG" id="KOG0141">
    <property type="taxonomic scope" value="Eukaryota"/>
</dbReference>
<dbReference type="HOGENOM" id="CLU_018204_4_1_1"/>
<dbReference type="InParanoid" id="Q5ATG5"/>
<dbReference type="OMA" id="YTTMAVR"/>
<dbReference type="OrthoDB" id="10254877at2759"/>
<dbReference type="Proteomes" id="UP000000560">
    <property type="component" value="Chromosome V"/>
</dbReference>
<dbReference type="GO" id="GO:0005737">
    <property type="term" value="C:cytoplasm"/>
    <property type="evidence" value="ECO:0000318"/>
    <property type="project" value="GO_Central"/>
</dbReference>
<dbReference type="GO" id="GO:0043231">
    <property type="term" value="C:intracellular membrane-bounded organelle"/>
    <property type="evidence" value="ECO:0007669"/>
    <property type="project" value="UniProtKB-ARBA"/>
</dbReference>
<dbReference type="GO" id="GO:0003995">
    <property type="term" value="F:acyl-CoA dehydrogenase activity"/>
    <property type="evidence" value="ECO:0000318"/>
    <property type="project" value="GO_Central"/>
</dbReference>
<dbReference type="GO" id="GO:0050660">
    <property type="term" value="F:flavin adenine dinucleotide binding"/>
    <property type="evidence" value="ECO:0007669"/>
    <property type="project" value="InterPro"/>
</dbReference>
<dbReference type="GO" id="GO:0033539">
    <property type="term" value="P:fatty acid beta-oxidation using acyl-CoA dehydrogenase"/>
    <property type="evidence" value="ECO:0000318"/>
    <property type="project" value="GO_Central"/>
</dbReference>
<dbReference type="Gene3D" id="1.10.540.10">
    <property type="entry name" value="Acyl-CoA dehydrogenase/oxidase, N-terminal domain"/>
    <property type="match status" value="1"/>
</dbReference>
<dbReference type="Gene3D" id="2.40.110.10">
    <property type="entry name" value="Butyryl-CoA Dehydrogenase, subunit A, domain 2"/>
    <property type="match status" value="1"/>
</dbReference>
<dbReference type="Gene3D" id="1.20.140.10">
    <property type="entry name" value="Butyryl-CoA Dehydrogenase, subunit A, domain 3"/>
    <property type="match status" value="1"/>
</dbReference>
<dbReference type="InterPro" id="IPR050741">
    <property type="entry name" value="Acyl-CoA_dehydrogenase"/>
</dbReference>
<dbReference type="InterPro" id="IPR006089">
    <property type="entry name" value="Acyl-CoA_DH_CS"/>
</dbReference>
<dbReference type="InterPro" id="IPR006091">
    <property type="entry name" value="Acyl-CoA_Oxase/DH_mid-dom"/>
</dbReference>
<dbReference type="InterPro" id="IPR046373">
    <property type="entry name" value="Acyl-CoA_Oxase/DH_mid-dom_sf"/>
</dbReference>
<dbReference type="InterPro" id="IPR036250">
    <property type="entry name" value="AcylCo_DH-like_C"/>
</dbReference>
<dbReference type="InterPro" id="IPR009075">
    <property type="entry name" value="AcylCo_DH/oxidase_C"/>
</dbReference>
<dbReference type="InterPro" id="IPR013786">
    <property type="entry name" value="AcylCoA_DH/ox_N"/>
</dbReference>
<dbReference type="InterPro" id="IPR037069">
    <property type="entry name" value="AcylCoA_DH/ox_N_sf"/>
</dbReference>
<dbReference type="InterPro" id="IPR009100">
    <property type="entry name" value="AcylCoA_DH/oxidase_NM_dom_sf"/>
</dbReference>
<dbReference type="PANTHER" id="PTHR48083:SF15">
    <property type="entry name" value="ACYL-COA DEHYDROGENASE APDG"/>
    <property type="match status" value="1"/>
</dbReference>
<dbReference type="PANTHER" id="PTHR48083">
    <property type="entry name" value="MEDIUM-CHAIN SPECIFIC ACYL-COA DEHYDROGENASE, MITOCHONDRIAL-RELATED"/>
    <property type="match status" value="1"/>
</dbReference>
<dbReference type="Pfam" id="PF00441">
    <property type="entry name" value="Acyl-CoA_dh_1"/>
    <property type="match status" value="1"/>
</dbReference>
<dbReference type="Pfam" id="PF02770">
    <property type="entry name" value="Acyl-CoA_dh_M"/>
    <property type="match status" value="1"/>
</dbReference>
<dbReference type="Pfam" id="PF02771">
    <property type="entry name" value="Acyl-CoA_dh_N"/>
    <property type="match status" value="1"/>
</dbReference>
<dbReference type="SUPFAM" id="SSF47203">
    <property type="entry name" value="Acyl-CoA dehydrogenase C-terminal domain-like"/>
    <property type="match status" value="1"/>
</dbReference>
<dbReference type="SUPFAM" id="SSF56645">
    <property type="entry name" value="Acyl-CoA dehydrogenase NM domain-like"/>
    <property type="match status" value="1"/>
</dbReference>
<dbReference type="PROSITE" id="PS00072">
    <property type="entry name" value="ACYL_COA_DH_1"/>
    <property type="match status" value="1"/>
</dbReference>
<gene>
    <name evidence="5" type="primary">apdG</name>
    <name type="ORF">AN8415</name>
</gene>
<organism>
    <name type="scientific">Emericella nidulans (strain FGSC A4 / ATCC 38163 / CBS 112.46 / NRRL 194 / M139)</name>
    <name type="common">Aspergillus nidulans</name>
    <dbReference type="NCBI Taxonomy" id="227321"/>
    <lineage>
        <taxon>Eukaryota</taxon>
        <taxon>Fungi</taxon>
        <taxon>Dikarya</taxon>
        <taxon>Ascomycota</taxon>
        <taxon>Pezizomycotina</taxon>
        <taxon>Eurotiomycetes</taxon>
        <taxon>Eurotiomycetidae</taxon>
        <taxon>Eurotiales</taxon>
        <taxon>Aspergillaceae</taxon>
        <taxon>Aspergillus</taxon>
        <taxon>Aspergillus subgen. Nidulantes</taxon>
    </lineage>
</organism>
<name>APDG_EMENI</name>
<feature type="chain" id="PRO_0000438456" description="Acyl-CoA dehydrogenase apdG">
    <location>
        <begin position="1"/>
        <end position="438"/>
    </location>
</feature>
<protein>
    <recommendedName>
        <fullName evidence="5">Acyl-CoA dehydrogenase apdG</fullName>
        <ecNumber evidence="7">1.-.-.-</ecNumber>
    </recommendedName>
    <alternativeName>
        <fullName evidence="5">Aspyridones biosynthesis protein G</fullName>
    </alternativeName>
</protein>
<reference key="1">
    <citation type="journal article" date="2005" name="Nature">
        <title>Sequencing of Aspergillus nidulans and comparative analysis with A. fumigatus and A. oryzae.</title>
        <authorList>
            <person name="Galagan J.E."/>
            <person name="Calvo S.E."/>
            <person name="Cuomo C."/>
            <person name="Ma L.-J."/>
            <person name="Wortman J.R."/>
            <person name="Batzoglou S."/>
            <person name="Lee S.-I."/>
            <person name="Bastuerkmen M."/>
            <person name="Spevak C.C."/>
            <person name="Clutterbuck J."/>
            <person name="Kapitonov V."/>
            <person name="Jurka J."/>
            <person name="Scazzocchio C."/>
            <person name="Farman M.L."/>
            <person name="Butler J."/>
            <person name="Purcell S."/>
            <person name="Harris S."/>
            <person name="Braus G.H."/>
            <person name="Draht O."/>
            <person name="Busch S."/>
            <person name="D'Enfert C."/>
            <person name="Bouchier C."/>
            <person name="Goldman G.H."/>
            <person name="Bell-Pedersen D."/>
            <person name="Griffiths-Jones S."/>
            <person name="Doonan J.H."/>
            <person name="Yu J."/>
            <person name="Vienken K."/>
            <person name="Pain A."/>
            <person name="Freitag M."/>
            <person name="Selker E.U."/>
            <person name="Archer D.B."/>
            <person name="Penalva M.A."/>
            <person name="Oakley B.R."/>
            <person name="Momany M."/>
            <person name="Tanaka T."/>
            <person name="Kumagai T."/>
            <person name="Asai K."/>
            <person name="Machida M."/>
            <person name="Nierman W.C."/>
            <person name="Denning D.W."/>
            <person name="Caddick M.X."/>
            <person name="Hynes M."/>
            <person name="Paoletti M."/>
            <person name="Fischer R."/>
            <person name="Miller B.L."/>
            <person name="Dyer P.S."/>
            <person name="Sachs M.S."/>
            <person name="Osmani S.A."/>
            <person name="Birren B.W."/>
        </authorList>
    </citation>
    <scope>NUCLEOTIDE SEQUENCE [LARGE SCALE GENOMIC DNA]</scope>
    <source>
        <strain>FGSC A4 / ATCC 38163 / CBS 112.46 / NRRL 194 / M139</strain>
    </source>
</reference>
<reference key="2">
    <citation type="journal article" date="2009" name="Fungal Genet. Biol.">
        <title>The 2008 update of the Aspergillus nidulans genome annotation: a community effort.</title>
        <authorList>
            <person name="Wortman J.R."/>
            <person name="Gilsenan J.M."/>
            <person name="Joardar V."/>
            <person name="Deegan J."/>
            <person name="Clutterbuck J."/>
            <person name="Andersen M.R."/>
            <person name="Archer D."/>
            <person name="Bencina M."/>
            <person name="Braus G."/>
            <person name="Coutinho P."/>
            <person name="von Dohren H."/>
            <person name="Doonan J."/>
            <person name="Driessen A.J."/>
            <person name="Durek P."/>
            <person name="Espeso E."/>
            <person name="Fekete E."/>
            <person name="Flipphi M."/>
            <person name="Estrada C.G."/>
            <person name="Geysens S."/>
            <person name="Goldman G."/>
            <person name="de Groot P.W."/>
            <person name="Hansen K."/>
            <person name="Harris S.D."/>
            <person name="Heinekamp T."/>
            <person name="Helmstaedt K."/>
            <person name="Henrissat B."/>
            <person name="Hofmann G."/>
            <person name="Homan T."/>
            <person name="Horio T."/>
            <person name="Horiuchi H."/>
            <person name="James S."/>
            <person name="Jones M."/>
            <person name="Karaffa L."/>
            <person name="Karanyi Z."/>
            <person name="Kato M."/>
            <person name="Keller N."/>
            <person name="Kelly D.E."/>
            <person name="Kiel J.A."/>
            <person name="Kim J.M."/>
            <person name="van der Klei I.J."/>
            <person name="Klis F.M."/>
            <person name="Kovalchuk A."/>
            <person name="Krasevec N."/>
            <person name="Kubicek C.P."/>
            <person name="Liu B."/>
            <person name="Maccabe A."/>
            <person name="Meyer V."/>
            <person name="Mirabito P."/>
            <person name="Miskei M."/>
            <person name="Mos M."/>
            <person name="Mullins J."/>
            <person name="Nelson D.R."/>
            <person name="Nielsen J."/>
            <person name="Oakley B.R."/>
            <person name="Osmani S.A."/>
            <person name="Pakula T."/>
            <person name="Paszewski A."/>
            <person name="Paulsen I."/>
            <person name="Pilsyk S."/>
            <person name="Pocsi I."/>
            <person name="Punt P.J."/>
            <person name="Ram A.F."/>
            <person name="Ren Q."/>
            <person name="Robellet X."/>
            <person name="Robson G."/>
            <person name="Seiboth B."/>
            <person name="van Solingen P."/>
            <person name="Specht T."/>
            <person name="Sun J."/>
            <person name="Taheri-Talesh N."/>
            <person name="Takeshita N."/>
            <person name="Ussery D."/>
            <person name="vanKuyk P.A."/>
            <person name="Visser H."/>
            <person name="van de Vondervoort P.J."/>
            <person name="de Vries R.P."/>
            <person name="Walton J."/>
            <person name="Xiang X."/>
            <person name="Xiong Y."/>
            <person name="Zeng A.P."/>
            <person name="Brandt B.W."/>
            <person name="Cornell M.J."/>
            <person name="van den Hondel C.A."/>
            <person name="Visser J."/>
            <person name="Oliver S.G."/>
            <person name="Turner G."/>
        </authorList>
    </citation>
    <scope>GENOME REANNOTATION</scope>
    <source>
        <strain>FGSC A4 / ATCC 38163 / CBS 112.46 / NRRL 194 / M139</strain>
    </source>
</reference>
<reference key="3">
    <citation type="journal article" date="2007" name="Nat. Chem. Biol.">
        <title>Genomics-driven discovery of PKS-NRPS hybrid metabolites from Aspergillus nidulans.</title>
        <authorList>
            <person name="Bergmann S."/>
            <person name="Schuemann J."/>
            <person name="Scherlach K."/>
            <person name="Lange C."/>
            <person name="Brakhage A.A."/>
            <person name="Hertweck C."/>
        </authorList>
    </citation>
    <scope>FUNCTION</scope>
    <scope>INDUCTION</scope>
    <scope>PATHWAY</scope>
</reference>
<reference key="4">
    <citation type="journal article" date="2010" name="J. Am. Chem. Soc.">
        <title>Analysis of intact and dissected fungal polyketide synthase-nonribosomal peptide synthetase in vitro and in Saccharomyces cerevisiae.</title>
        <authorList>
            <person name="Xu W."/>
            <person name="Cai X."/>
            <person name="Jung M.E."/>
            <person name="Tang Y."/>
        </authorList>
    </citation>
    <scope>FUNCTION</scope>
</reference>
<reference key="5">
    <citation type="journal article" date="2013" name="Chem. Sci.">
        <title>One pathway, many compounds: Heterologous expression of a fungal biosynthetic pathway reveals its intrinsic potential for diversity.</title>
        <authorList>
            <person name="Wasil Z."/>
            <person name="Pahirulzaman K.A.K."/>
            <person name="Butts C."/>
            <person name="Simpson T.J."/>
            <person name="Lazarus C.M."/>
            <person name="Cox R.J."/>
        </authorList>
    </citation>
    <scope>FUNCTION</scope>
</reference>
<reference key="6">
    <citation type="journal article" date="2014" name="Org. Lett.">
        <title>Methylation-dependent acyl transfer between polyketide synthase and nonribosomal peptide synthetase modules in fungal natural product biosynthesis.</title>
        <authorList>
            <person name="Zou Y."/>
            <person name="Xu W."/>
            <person name="Tsunematsu Y."/>
            <person name="Tang M."/>
            <person name="Watanabe K."/>
            <person name="Tang Y."/>
        </authorList>
    </citation>
    <scope>FUNCTION</scope>
</reference>
<evidence type="ECO:0000269" key="1">
    <source>
    </source>
</evidence>
<evidence type="ECO:0000269" key="2">
    <source>
    </source>
</evidence>
<evidence type="ECO:0000269" key="3">
    <source>
    </source>
</evidence>
<evidence type="ECO:0000269" key="4">
    <source ref="5"/>
</evidence>
<evidence type="ECO:0000303" key="5">
    <source>
    </source>
</evidence>
<evidence type="ECO:0000305" key="6"/>
<evidence type="ECO:0000305" key="7">
    <source>
    </source>
</evidence>
<evidence type="ECO:0000305" key="8">
    <source ref="5"/>
</evidence>
<accession>Q5ATG5</accession>
<accession>C8VEB7</accession>
<sequence length="438" mass="47824">MAEISSVPFAEPPYLRGLPSPYYNESHRRFQKACRAFLYENLLKHAMEWEKAGTVPEHVFSDFCKANMLLPNLPAPLPVAWLKRLGIHDILGVKVEEWDYLHTGIYSDEMARSGLSGPSGSLTAGFAFGTPPIIKYGSKELQEKFLPDLLTGKKRNCIAITEPDAGSDVAGITTTATKSADGKYYIVNGNKKWITNGIWSDYSTMAVRTGGPGAGGLSLLVVPLKNYPGVTMQRLKVSGQITGGTTYIELDEVKVPVENLIGLEGDGMKMIMNNFNHERLTIAVGVTRQARVALSTAFSYCLKREAFGKTLMDQPVVRHRLAKAGAELETMWAFVEQLLYQLTNLPKEEADRQLGGITAMAKAKGAMVLNECAQTAVLLFGGAGFTKQGQGELAEAILRDVPGARIPGGSEDVLLDLSIRQLVKLFKAEEKKLGKARI</sequence>
<proteinExistence type="evidence at transcript level"/>
<keyword id="KW-0274">FAD</keyword>
<keyword id="KW-0285">Flavoprotein</keyword>
<keyword id="KW-0560">Oxidoreductase</keyword>
<keyword id="KW-1185">Reference proteome</keyword>